<organism>
    <name type="scientific">Chlorobaculum tepidum (strain ATCC 49652 / DSM 12025 / NBRC 103806 / TLS)</name>
    <name type="common">Chlorobium tepidum</name>
    <dbReference type="NCBI Taxonomy" id="194439"/>
    <lineage>
        <taxon>Bacteria</taxon>
        <taxon>Pseudomonadati</taxon>
        <taxon>Chlorobiota</taxon>
        <taxon>Chlorobiia</taxon>
        <taxon>Chlorobiales</taxon>
        <taxon>Chlorobiaceae</taxon>
        <taxon>Chlorobaculum</taxon>
    </lineage>
</organism>
<reference key="1">
    <citation type="journal article" date="2002" name="Proc. Natl. Acad. Sci. U.S.A.">
        <title>The complete genome sequence of Chlorobium tepidum TLS, a photosynthetic, anaerobic, green-sulfur bacterium.</title>
        <authorList>
            <person name="Eisen J.A."/>
            <person name="Nelson K.E."/>
            <person name="Paulsen I.T."/>
            <person name="Heidelberg J.F."/>
            <person name="Wu M."/>
            <person name="Dodson R.J."/>
            <person name="DeBoy R.T."/>
            <person name="Gwinn M.L."/>
            <person name="Nelson W.C."/>
            <person name="Haft D.H."/>
            <person name="Hickey E.K."/>
            <person name="Peterson J.D."/>
            <person name="Durkin A.S."/>
            <person name="Kolonay J.F."/>
            <person name="Yang F."/>
            <person name="Holt I.E."/>
            <person name="Umayam L.A."/>
            <person name="Mason T.M."/>
            <person name="Brenner M."/>
            <person name="Shea T.P."/>
            <person name="Parksey D.S."/>
            <person name="Nierman W.C."/>
            <person name="Feldblyum T.V."/>
            <person name="Hansen C.L."/>
            <person name="Craven M.B."/>
            <person name="Radune D."/>
            <person name="Vamathevan J.J."/>
            <person name="Khouri H.M."/>
            <person name="White O."/>
            <person name="Gruber T.M."/>
            <person name="Ketchum K.A."/>
            <person name="Venter J.C."/>
            <person name="Tettelin H."/>
            <person name="Bryant D.A."/>
            <person name="Fraser C.M."/>
        </authorList>
    </citation>
    <scope>NUCLEOTIDE SEQUENCE [LARGE SCALE GENOMIC DNA]</scope>
    <source>
        <strain>ATCC 49652 / DSM 12025 / NBRC 103806 / TLS</strain>
    </source>
</reference>
<dbReference type="EC" id="2.7.7.6" evidence="1"/>
<dbReference type="EMBL" id="AE006470">
    <property type="protein sequence ID" value="AAM71403.1"/>
    <property type="molecule type" value="Genomic_DNA"/>
</dbReference>
<dbReference type="RefSeq" id="NP_661061.1">
    <property type="nucleotide sequence ID" value="NC_002932.3"/>
</dbReference>
<dbReference type="SMR" id="Q8KG15"/>
<dbReference type="STRING" id="194439.CT0155"/>
<dbReference type="EnsemblBacteria" id="AAM71403">
    <property type="protein sequence ID" value="AAM71403"/>
    <property type="gene ID" value="CT0155"/>
</dbReference>
<dbReference type="KEGG" id="cte:CT0155"/>
<dbReference type="PATRIC" id="fig|194439.7.peg.152"/>
<dbReference type="eggNOG" id="COG0085">
    <property type="taxonomic scope" value="Bacteria"/>
</dbReference>
<dbReference type="HOGENOM" id="CLU_000524_4_0_10"/>
<dbReference type="OrthoDB" id="9803954at2"/>
<dbReference type="Proteomes" id="UP000001007">
    <property type="component" value="Chromosome"/>
</dbReference>
<dbReference type="GO" id="GO:0000428">
    <property type="term" value="C:DNA-directed RNA polymerase complex"/>
    <property type="evidence" value="ECO:0007669"/>
    <property type="project" value="UniProtKB-KW"/>
</dbReference>
<dbReference type="GO" id="GO:0003677">
    <property type="term" value="F:DNA binding"/>
    <property type="evidence" value="ECO:0007669"/>
    <property type="project" value="UniProtKB-UniRule"/>
</dbReference>
<dbReference type="GO" id="GO:0003899">
    <property type="term" value="F:DNA-directed RNA polymerase activity"/>
    <property type="evidence" value="ECO:0007669"/>
    <property type="project" value="UniProtKB-UniRule"/>
</dbReference>
<dbReference type="GO" id="GO:0032549">
    <property type="term" value="F:ribonucleoside binding"/>
    <property type="evidence" value="ECO:0007669"/>
    <property type="project" value="InterPro"/>
</dbReference>
<dbReference type="GO" id="GO:0006351">
    <property type="term" value="P:DNA-templated transcription"/>
    <property type="evidence" value="ECO:0007669"/>
    <property type="project" value="UniProtKB-UniRule"/>
</dbReference>
<dbReference type="CDD" id="cd00653">
    <property type="entry name" value="RNA_pol_B_RPB2"/>
    <property type="match status" value="1"/>
</dbReference>
<dbReference type="Gene3D" id="2.40.50.100">
    <property type="match status" value="1"/>
</dbReference>
<dbReference type="Gene3D" id="2.40.50.150">
    <property type="match status" value="1"/>
</dbReference>
<dbReference type="Gene3D" id="3.90.1100.10">
    <property type="match status" value="2"/>
</dbReference>
<dbReference type="Gene3D" id="2.30.150.10">
    <property type="entry name" value="DNA-directed RNA polymerase, beta subunit, external 1 domain"/>
    <property type="match status" value="1"/>
</dbReference>
<dbReference type="Gene3D" id="2.40.270.10">
    <property type="entry name" value="DNA-directed RNA polymerase, subunit 2, domain 6"/>
    <property type="match status" value="2"/>
</dbReference>
<dbReference type="Gene3D" id="3.90.1800.10">
    <property type="entry name" value="RNA polymerase alpha subunit dimerisation domain"/>
    <property type="match status" value="1"/>
</dbReference>
<dbReference type="Gene3D" id="3.90.1110.10">
    <property type="entry name" value="RNA polymerase Rpb2, domain 2"/>
    <property type="match status" value="2"/>
</dbReference>
<dbReference type="HAMAP" id="MF_01321">
    <property type="entry name" value="RNApol_bact_RpoB"/>
    <property type="match status" value="1"/>
</dbReference>
<dbReference type="InterPro" id="IPR042107">
    <property type="entry name" value="DNA-dir_RNA_pol_bsu_ext_1_sf"/>
</dbReference>
<dbReference type="InterPro" id="IPR019462">
    <property type="entry name" value="DNA-dir_RNA_pol_bsu_external_1"/>
</dbReference>
<dbReference type="InterPro" id="IPR015712">
    <property type="entry name" value="DNA-dir_RNA_pol_su2"/>
</dbReference>
<dbReference type="InterPro" id="IPR007120">
    <property type="entry name" value="DNA-dir_RNAP_su2_dom"/>
</dbReference>
<dbReference type="InterPro" id="IPR037033">
    <property type="entry name" value="DNA-dir_RNAP_su2_hyb_sf"/>
</dbReference>
<dbReference type="InterPro" id="IPR010243">
    <property type="entry name" value="RNA_pol_bsu_bac"/>
</dbReference>
<dbReference type="InterPro" id="IPR007121">
    <property type="entry name" value="RNA_pol_bsu_CS"/>
</dbReference>
<dbReference type="InterPro" id="IPR007644">
    <property type="entry name" value="RNA_pol_bsu_protrusion"/>
</dbReference>
<dbReference type="InterPro" id="IPR007642">
    <property type="entry name" value="RNA_pol_Rpb2_2"/>
</dbReference>
<dbReference type="InterPro" id="IPR037034">
    <property type="entry name" value="RNA_pol_Rpb2_2_sf"/>
</dbReference>
<dbReference type="InterPro" id="IPR007645">
    <property type="entry name" value="RNA_pol_Rpb2_3"/>
</dbReference>
<dbReference type="InterPro" id="IPR007641">
    <property type="entry name" value="RNA_pol_Rpb2_7"/>
</dbReference>
<dbReference type="InterPro" id="IPR014724">
    <property type="entry name" value="RNA_pol_RPB2_OB-fold"/>
</dbReference>
<dbReference type="NCBIfam" id="NF001616">
    <property type="entry name" value="PRK00405.1"/>
    <property type="match status" value="1"/>
</dbReference>
<dbReference type="NCBIfam" id="TIGR02013">
    <property type="entry name" value="rpoB"/>
    <property type="match status" value="1"/>
</dbReference>
<dbReference type="PANTHER" id="PTHR20856">
    <property type="entry name" value="DNA-DIRECTED RNA POLYMERASE I SUBUNIT 2"/>
    <property type="match status" value="1"/>
</dbReference>
<dbReference type="Pfam" id="PF04563">
    <property type="entry name" value="RNA_pol_Rpb2_1"/>
    <property type="match status" value="1"/>
</dbReference>
<dbReference type="Pfam" id="PF04561">
    <property type="entry name" value="RNA_pol_Rpb2_2"/>
    <property type="match status" value="3"/>
</dbReference>
<dbReference type="Pfam" id="PF04565">
    <property type="entry name" value="RNA_pol_Rpb2_3"/>
    <property type="match status" value="1"/>
</dbReference>
<dbReference type="Pfam" id="PF10385">
    <property type="entry name" value="RNA_pol_Rpb2_45"/>
    <property type="match status" value="1"/>
</dbReference>
<dbReference type="Pfam" id="PF00562">
    <property type="entry name" value="RNA_pol_Rpb2_6"/>
    <property type="match status" value="1"/>
</dbReference>
<dbReference type="Pfam" id="PF04560">
    <property type="entry name" value="RNA_pol_Rpb2_7"/>
    <property type="match status" value="1"/>
</dbReference>
<dbReference type="SUPFAM" id="SSF64484">
    <property type="entry name" value="beta and beta-prime subunits of DNA dependent RNA-polymerase"/>
    <property type="match status" value="1"/>
</dbReference>
<dbReference type="PROSITE" id="PS01166">
    <property type="entry name" value="RNA_POL_BETA"/>
    <property type="match status" value="1"/>
</dbReference>
<comment type="function">
    <text evidence="1">DNA-dependent RNA polymerase catalyzes the transcription of DNA into RNA using the four ribonucleoside triphosphates as substrates.</text>
</comment>
<comment type="catalytic activity">
    <reaction evidence="1">
        <text>RNA(n) + a ribonucleoside 5'-triphosphate = RNA(n+1) + diphosphate</text>
        <dbReference type="Rhea" id="RHEA:21248"/>
        <dbReference type="Rhea" id="RHEA-COMP:14527"/>
        <dbReference type="Rhea" id="RHEA-COMP:17342"/>
        <dbReference type="ChEBI" id="CHEBI:33019"/>
        <dbReference type="ChEBI" id="CHEBI:61557"/>
        <dbReference type="ChEBI" id="CHEBI:140395"/>
        <dbReference type="EC" id="2.7.7.6"/>
    </reaction>
</comment>
<comment type="subunit">
    <text evidence="1">The RNAP catalytic core consists of 2 alpha, 1 beta, 1 beta' and 1 omega subunit. When a sigma factor is associated with the core the holoenzyme is formed, which can initiate transcription.</text>
</comment>
<comment type="similarity">
    <text evidence="1">Belongs to the RNA polymerase beta chain family.</text>
</comment>
<protein>
    <recommendedName>
        <fullName evidence="1">DNA-directed RNA polymerase subunit beta</fullName>
        <shortName evidence="1">RNAP subunit beta</shortName>
        <ecNumber evidence="1">2.7.7.6</ecNumber>
    </recommendedName>
    <alternativeName>
        <fullName evidence="1">RNA polymerase subunit beta</fullName>
    </alternativeName>
    <alternativeName>
        <fullName evidence="1">Transcriptase subunit beta</fullName>
    </alternativeName>
</protein>
<feature type="chain" id="PRO_0000047881" description="DNA-directed RNA polymerase subunit beta">
    <location>
        <begin position="1"/>
        <end position="1303"/>
    </location>
</feature>
<keyword id="KW-0240">DNA-directed RNA polymerase</keyword>
<keyword id="KW-0548">Nucleotidyltransferase</keyword>
<keyword id="KW-1185">Reference proteome</keyword>
<keyword id="KW-0804">Transcription</keyword>
<keyword id="KW-0808">Transferase</keyword>
<gene>
    <name evidence="1" type="primary">rpoB</name>
    <name type="ordered locus">CT0155</name>
</gene>
<sequence>MKVADATPTPCIDFSKIQSIINPPDLLKVQLDSFHNFIQDSVPLEKRKDQGLEKVLRSAFPITDTRGLYLLEYISYSFDKPKYTVEECIERGLTYDVSLKIKLKLSYKDEADEPDWKETIQQEVYLGRIPYMTDRGTFIINGAERVVVAQLHRSPGVVFSEAVHPNGKKMYSAKIVPTRGSWIEFQTDINNQIFVYIDQKKNFLVTALLRAIGFAKDEDILGLFDLVEEVEVSSKSSKREQLLGQYLASDIIDMTTGEVVPARAAITEEIIDQIVAAGYKTVKVMKTTSPEKGVDKSVIINTILNDSSATEEEALEIVYEELRSNEAPDIDAARSFLERTFFNQKKYDLGDVGRYRIQKKLQNELAELSAYLEKRPELKELSDAIYERILQTISTYSEEPIGEDILVLTHYDIIAVINYLIKLINGMAEVDDVDHLANRRVRSVGEQLAAQFVIGLARMGKNVREKLNSRDTDKIAPADLINARTVSSVVSSFFATSQLSQFMDQTNPLAEMTNKRRVSALGPGGLTRERAGFEVRDVHYTHYGRLCPIETPEGPNIGLISSLSVYAEINDKGFIQTPYRVVENGQVTDKVVMLSAEDEENKITVPVSIELDENNRIAAESVQARTKGDYPLVLAEEVNYMDVSPVQIVSAAAALIPFLEHDDGNRALMGANMQRQAVPLLVSEAPIVGTGMEAKVARDSRAVIVAEGPGVVQCVTADRIEVRYDLDPENNTVSLLDPDEGVKVYKLIKFKRSNQDTCISQRPLVHNGQRVNAGDVLADSSSTDNGELALGKNVLVAFMPWRGYNFEDAIVLSERLVYDDVFTSIHVHEFESSVRDTKRGEEQFTRDIYNVSEDALRNLDENGIVRIGAEVKERDILVGKITPKGESDPTPEEKLLRAIFGDKSSDVKDASMHVPAGMKGIVIKTKLFSRKKKIGMDVKERMEAIDKQFDLKEADLRSRFAKWMKQYLNGKKSVAITSDKGKVLVPEGTVIDEALLAKFNGLPFLESIDLSKGIVSGAKTNENVVRLIREYRLKLKDLSDERENEKYKINVGDELPPGIEELAKVYIAQKRKIQVGDKMAGRHGNKGVVGKILPIEDMPFMEDGTPVDIVLNPLGVPSRMNIGQLYETSLGWAGKKLGVKFKTPIFSGATYTEVQEYLEKAGLPGHGKVKLFDGRTGEQFHDEVTVGYIYMLKLSHLVDDKIHARSIGPYSLITQQPLGGKAQFGGQRFGEMEVWALEAYGAANILREMLTVKSDDVIGRNKTYEAIVKGQNLPEPGTPESFNVLIRELQGLGLEIRIDDRVP</sequence>
<accession>Q8KG15</accession>
<name>RPOB_CHLTE</name>
<proteinExistence type="inferred from homology"/>
<evidence type="ECO:0000255" key="1">
    <source>
        <dbReference type="HAMAP-Rule" id="MF_01321"/>
    </source>
</evidence>